<feature type="chain" id="PRO_0000460020" description="Cyclic GMP-AMP synthase-like receptor">
    <location>
        <begin position="1"/>
        <end position="341"/>
    </location>
</feature>
<feature type="binding site" evidence="2">
    <location>
        <position position="64"/>
    </location>
    <ligand>
        <name>ATP</name>
        <dbReference type="ChEBI" id="CHEBI:30616"/>
    </ligand>
</feature>
<feature type="binding site" evidence="2">
    <location>
        <begin position="77"/>
        <end position="79"/>
    </location>
    <ligand>
        <name>ATP</name>
        <dbReference type="ChEBI" id="CHEBI:30616"/>
    </ligand>
</feature>
<feature type="binding site" evidence="2">
    <location>
        <position position="77"/>
    </location>
    <ligand>
        <name>Mg(2+)</name>
        <dbReference type="ChEBI" id="CHEBI:18420"/>
        <note>catalytic</note>
    </ligand>
</feature>
<feature type="binding site" evidence="2">
    <location>
        <position position="79"/>
    </location>
    <ligand>
        <name>Mg(2+)</name>
        <dbReference type="ChEBI" id="CHEBI:18420"/>
        <note>catalytic</note>
    </ligand>
</feature>
<feature type="binding site" evidence="2">
    <location>
        <position position="172"/>
    </location>
    <ligand>
        <name>GTP</name>
        <dbReference type="ChEBI" id="CHEBI:37565"/>
    </ligand>
</feature>
<feature type="binding site" evidence="2">
    <location>
        <position position="172"/>
    </location>
    <ligand>
        <name>Mg(2+)</name>
        <dbReference type="ChEBI" id="CHEBI:18420"/>
        <note>catalytic</note>
    </ligand>
</feature>
<feature type="binding site" evidence="2">
    <location>
        <position position="230"/>
    </location>
    <ligand>
        <name>ATP</name>
        <dbReference type="ChEBI" id="CHEBI:30616"/>
    </ligand>
</feature>
<feature type="binding site" evidence="2">
    <location>
        <begin position="246"/>
        <end position="250"/>
    </location>
    <ligand>
        <name>ATP</name>
        <dbReference type="ChEBI" id="CHEBI:30616"/>
    </ligand>
</feature>
<feature type="binding site" evidence="1">
    <location>
        <position position="258"/>
    </location>
    <ligand>
        <name>Mn(2+)</name>
        <dbReference type="ChEBI" id="CHEBI:29035"/>
    </ligand>
</feature>
<organism>
    <name type="scientific">Hydra vulgaris</name>
    <name type="common">Hydra</name>
    <name type="synonym">Hydra attenuata</name>
    <dbReference type="NCBI Taxonomy" id="6087"/>
    <lineage>
        <taxon>Eukaryota</taxon>
        <taxon>Metazoa</taxon>
        <taxon>Cnidaria</taxon>
        <taxon>Hydrozoa</taxon>
        <taxon>Hydroidolina</taxon>
        <taxon>Anthoathecata</taxon>
        <taxon>Aplanulata</taxon>
        <taxon>Hydridae</taxon>
        <taxon>Hydra</taxon>
    </lineage>
</organism>
<comment type="function">
    <text evidence="3">Nucleotidyltransferase that catalyzes the formation of cyclic GMP-AMP (2',3'-cGAMP) from ATP and GTP and plays a key role in innate immunity (PubMed:37379839). Acts as a key sensor of double-stranded RNA (dsRNA), the presence of dsRNA in the cytoplasm being a danger signal that triggers the immune responses (PubMed:37379839). Directly binds dsRNA, activating the nucleotidyltransferase activity, leading to synthesis of 2',3'-cGAMP, a second messenger that binds to and activates Sting, thereby triggering the immune response via activation of the NF-kappa-B transcription factor (PubMed:37379839).</text>
</comment>
<comment type="catalytic activity">
    <reaction evidence="3">
        <text>GTP + ATP = 2',3'-cGAMP + 2 diphosphate</text>
        <dbReference type="Rhea" id="RHEA:42064"/>
        <dbReference type="ChEBI" id="CHEBI:30616"/>
        <dbReference type="ChEBI" id="CHEBI:33019"/>
        <dbReference type="ChEBI" id="CHEBI:37565"/>
        <dbReference type="ChEBI" id="CHEBI:143093"/>
        <dbReference type="EC" id="2.7.7.86"/>
    </reaction>
    <physiologicalReaction direction="left-to-right" evidence="3">
        <dbReference type="Rhea" id="RHEA:42065"/>
    </physiologicalReaction>
</comment>
<comment type="catalytic activity">
    <reaction evidence="3">
        <text>GTP + ATP = pppGp(2'-5')A + diphosphate</text>
        <dbReference type="Rhea" id="RHEA:23748"/>
        <dbReference type="ChEBI" id="CHEBI:30616"/>
        <dbReference type="ChEBI" id="CHEBI:33019"/>
        <dbReference type="ChEBI" id="CHEBI:37565"/>
        <dbReference type="ChEBI" id="CHEBI:78318"/>
    </reaction>
    <physiologicalReaction direction="left-to-right" evidence="3">
        <dbReference type="Rhea" id="RHEA:23749"/>
    </physiologicalReaction>
</comment>
<comment type="catalytic activity">
    <reaction evidence="3">
        <text>pppGp(2'-5')A = 2',3'-cGAMP + diphosphate</text>
        <dbReference type="Rhea" id="RHEA:23924"/>
        <dbReference type="ChEBI" id="CHEBI:33019"/>
        <dbReference type="ChEBI" id="CHEBI:78318"/>
        <dbReference type="ChEBI" id="CHEBI:143093"/>
    </reaction>
    <physiologicalReaction direction="left-to-right" evidence="3">
        <dbReference type="Rhea" id="RHEA:23925"/>
    </physiologicalReaction>
</comment>
<comment type="cofactor">
    <cofactor evidence="1">
        <name>Mg(2+)</name>
        <dbReference type="ChEBI" id="CHEBI:18420"/>
    </cofactor>
    <cofactor evidence="1">
        <name>Mn(2+)</name>
        <dbReference type="ChEBI" id="CHEBI:29035"/>
    </cofactor>
</comment>
<comment type="similarity">
    <text evidence="5">Belongs to the mab-21 family.</text>
</comment>
<reference key="1">
    <citation type="journal article" date="2022" name="Sci. Adv.">
        <title>Deeply conserved synteny and the evolution of metazoan chromosomes.</title>
        <authorList>
            <person name="Simakov O."/>
            <person name="Bredeson J."/>
            <person name="Berkoff K."/>
            <person name="Marletaz F."/>
            <person name="Mitros T."/>
            <person name="Schultz D.T."/>
            <person name="O'Connell B.L."/>
            <person name="Dear P."/>
            <person name="Martinez D.E."/>
            <person name="Steele R.E."/>
            <person name="Green R.E."/>
            <person name="David C.N."/>
            <person name="Rokhsar D.S."/>
        </authorList>
    </citation>
    <scope>NUCLEOTIDE SEQUENCE [LARGE SCALE GENOMIC DNA]</scope>
</reference>
<reference key="2">
    <citation type="journal article" date="2023" name="Cell">
        <title>cGLRs are a diverse family of pattern recognition receptors in innate immunity.</title>
        <authorList>
            <person name="Li Y."/>
            <person name="Slavik K.M."/>
            <person name="Toyoda H.C."/>
            <person name="Morehouse B.R."/>
            <person name="de Oliveira Mann C.C."/>
            <person name="Elek A."/>
            <person name="Levy S."/>
            <person name="Wang Z."/>
            <person name="Mears K.S."/>
            <person name="Liu J."/>
            <person name="Kashin D."/>
            <person name="Guo X."/>
            <person name="Mass T."/>
            <person name="Sebe-Pedros A."/>
            <person name="Schwede F."/>
            <person name="Kranzusch P.J."/>
        </authorList>
    </citation>
    <scope>FUNCTION</scope>
    <scope>CATALYTIC ACTIVITY</scope>
</reference>
<protein>
    <recommendedName>
        <fullName evidence="5">Cyclic GMP-AMP synthase-like receptor</fullName>
        <shortName evidence="4">Hv-cGLR</shortName>
        <ecNumber evidence="3">2.7.7.86</ecNumber>
    </recommendedName>
</protein>
<name>CGLR_HYDVU</name>
<proteinExistence type="evidence at protein level"/>
<accession>A0A8B6XWW9</accession>
<sequence>MVDAMNQEWWKKASDVVNAFHKEKAAIPSNAQRAREDLKENIAFLRTYLEFNYNLCDKVVFSGSAYEDLNISGDNIEFDVMLIAQRSNFLYLTECNNGVCKIRSNSPFLNYPFDEDFNIDSEKYRSFFFGLIQKWSNMMMTHKKKSFTLVNHGVATQMNVNDEKGILWYQVDLVPCFEAKSSLISEEKFYCVPKPIPNQRLYWRLSYSIDETQIAKKLSNDAKKCIRIIKALFKLETNGLFTKFTSYHIKTSAFYLKERGNWPNEENLGRSIYDFLVFIKESLKNGELKHFFDRTINLLDKIEVSTEQLANTINGWLKNEQKFLTKFSSSIDANIKQLAIK</sequence>
<evidence type="ECO:0000250" key="1">
    <source>
        <dbReference type="UniProtKB" id="D6WI29"/>
    </source>
</evidence>
<evidence type="ECO:0000250" key="2">
    <source>
        <dbReference type="UniProtKB" id="Q8N884"/>
    </source>
</evidence>
<evidence type="ECO:0000269" key="3">
    <source>
    </source>
</evidence>
<evidence type="ECO:0000303" key="4">
    <source>
    </source>
</evidence>
<evidence type="ECO:0000305" key="5"/>
<keyword id="KW-0067">ATP-binding</keyword>
<keyword id="KW-0342">GTP-binding</keyword>
<keyword id="KW-0391">Immunity</keyword>
<keyword id="KW-0399">Innate immunity</keyword>
<keyword id="KW-0460">Magnesium</keyword>
<keyword id="KW-0464">Manganese</keyword>
<keyword id="KW-0479">Metal-binding</keyword>
<keyword id="KW-0547">Nucleotide-binding</keyword>
<keyword id="KW-0548">Nucleotidyltransferase</keyword>
<keyword id="KW-1185">Reference proteome</keyword>
<keyword id="KW-0694">RNA-binding</keyword>
<keyword id="KW-0808">Transferase</keyword>
<dbReference type="EC" id="2.7.7.86" evidence="3"/>
<dbReference type="EMBL" id="JAGKSS010000007">
    <property type="status" value="NOT_ANNOTATED_CDS"/>
    <property type="molecule type" value="Genomic_DNA"/>
</dbReference>
<dbReference type="RefSeq" id="XP_004205934.1">
    <property type="nucleotide sequence ID" value="XM_004205886.2"/>
</dbReference>
<dbReference type="SMR" id="A0A8B6XWW9"/>
<dbReference type="EnsemblMetazoa" id="XM_004205886.3">
    <property type="protein sequence ID" value="XP_004205934.1"/>
    <property type="gene ID" value="LOC101234795"/>
</dbReference>
<dbReference type="GeneID" id="101234795"/>
<dbReference type="KEGG" id="hmg:101234795"/>
<dbReference type="CTD" id="101234795"/>
<dbReference type="OMA" id="HELLWRQ"/>
<dbReference type="OrthoDB" id="5949259at2759"/>
<dbReference type="Proteomes" id="UP000694840">
    <property type="component" value="Unplaced"/>
</dbReference>
<dbReference type="GO" id="GO:0061501">
    <property type="term" value="F:2',3'-cyclic GMP-AMP synthase activity"/>
    <property type="evidence" value="ECO:0000314"/>
    <property type="project" value="UniProtKB"/>
</dbReference>
<dbReference type="GO" id="GO:0005524">
    <property type="term" value="F:ATP binding"/>
    <property type="evidence" value="ECO:0007669"/>
    <property type="project" value="UniProtKB-KW"/>
</dbReference>
<dbReference type="GO" id="GO:0003690">
    <property type="term" value="F:double-stranded DNA binding"/>
    <property type="evidence" value="ECO:0000314"/>
    <property type="project" value="UniProtKB"/>
</dbReference>
<dbReference type="GO" id="GO:0005525">
    <property type="term" value="F:GTP binding"/>
    <property type="evidence" value="ECO:0007669"/>
    <property type="project" value="UniProtKB-KW"/>
</dbReference>
<dbReference type="GO" id="GO:0046872">
    <property type="term" value="F:metal ion binding"/>
    <property type="evidence" value="ECO:0007669"/>
    <property type="project" value="UniProtKB-KW"/>
</dbReference>
<dbReference type="GO" id="GO:0003723">
    <property type="term" value="F:RNA binding"/>
    <property type="evidence" value="ECO:0007669"/>
    <property type="project" value="UniProtKB-KW"/>
</dbReference>
<dbReference type="GO" id="GO:0045087">
    <property type="term" value="P:innate immune response"/>
    <property type="evidence" value="ECO:0007669"/>
    <property type="project" value="UniProtKB-KW"/>
</dbReference>
<dbReference type="Gene3D" id="1.10.1410.40">
    <property type="match status" value="1"/>
</dbReference>
<dbReference type="Gene3D" id="3.30.460.90">
    <property type="match status" value="1"/>
</dbReference>
<dbReference type="InterPro" id="IPR046903">
    <property type="entry name" value="Mab-21-like_nuc_Trfase"/>
</dbReference>
<dbReference type="InterPro" id="IPR046906">
    <property type="entry name" value="Mab-21_HhH/H2TH-like"/>
</dbReference>
<dbReference type="InterPro" id="IPR024810">
    <property type="entry name" value="MAB21L/cGLR"/>
</dbReference>
<dbReference type="PANTHER" id="PTHR10656">
    <property type="entry name" value="CELL FATE DETERMINING PROTEIN MAB21-RELATED"/>
    <property type="match status" value="1"/>
</dbReference>
<dbReference type="PANTHER" id="PTHR10656:SF42">
    <property type="entry name" value="CYCLIC GMP-AMP SYNTHASE-LIKE PROTEIN-RELATED"/>
    <property type="match status" value="1"/>
</dbReference>
<dbReference type="Pfam" id="PF03281">
    <property type="entry name" value="Mab-21"/>
    <property type="match status" value="1"/>
</dbReference>
<dbReference type="Pfam" id="PF20266">
    <property type="entry name" value="Mab-21_C"/>
    <property type="match status" value="1"/>
</dbReference>
<dbReference type="SMART" id="SM01265">
    <property type="entry name" value="Mab-21"/>
    <property type="match status" value="1"/>
</dbReference>
<gene>
    <name evidence="4" type="primary">cGLR</name>
</gene>